<keyword id="KW-0067">ATP-binding</keyword>
<keyword id="KW-0418">Kinase</keyword>
<keyword id="KW-0507">mRNA processing</keyword>
<keyword id="KW-0523">Neurodegeneration</keyword>
<keyword id="KW-0547">Nucleotide-binding</keyword>
<keyword id="KW-0539">Nucleus</keyword>
<keyword id="KW-1185">Reference proteome</keyword>
<keyword id="KW-0808">Transferase</keyword>
<keyword id="KW-0819">tRNA processing</keyword>
<organism>
    <name type="scientific">Danio rerio</name>
    <name type="common">Zebrafish</name>
    <name type="synonym">Brachydanio rerio</name>
    <dbReference type="NCBI Taxonomy" id="7955"/>
    <lineage>
        <taxon>Eukaryota</taxon>
        <taxon>Metazoa</taxon>
        <taxon>Chordata</taxon>
        <taxon>Craniata</taxon>
        <taxon>Vertebrata</taxon>
        <taxon>Euteleostomi</taxon>
        <taxon>Actinopterygii</taxon>
        <taxon>Neopterygii</taxon>
        <taxon>Teleostei</taxon>
        <taxon>Ostariophysi</taxon>
        <taxon>Cypriniformes</taxon>
        <taxon>Danionidae</taxon>
        <taxon>Danioninae</taxon>
        <taxon>Danio</taxon>
    </lineage>
</organism>
<protein>
    <recommendedName>
        <fullName>Polyribonucleotide 5'-hydroxyl-kinase Clp1</fullName>
        <ecNumber>2.7.1.78</ecNumber>
    </recommendedName>
    <alternativeName>
        <fullName>Polyadenylation factor Clp1</fullName>
    </alternativeName>
    <alternativeName>
        <fullName>Polynucleotide kinase Clp1</fullName>
    </alternativeName>
    <alternativeName>
        <fullName>Pre-mRNA cleavage complex II protein Clp1</fullName>
    </alternativeName>
</protein>
<feature type="chain" id="PRO_0000429474" description="Polyribonucleotide 5'-hydroxyl-kinase Clp1">
    <location>
        <begin position="1"/>
        <end position="443"/>
    </location>
</feature>
<feature type="region of interest" description="Disordered" evidence="2">
    <location>
        <begin position="1"/>
        <end position="27"/>
    </location>
</feature>
<feature type="compositionally biased region" description="Basic and acidic residues" evidence="2">
    <location>
        <begin position="1"/>
        <end position="11"/>
    </location>
</feature>
<feature type="compositionally biased region" description="Low complexity" evidence="2">
    <location>
        <begin position="13"/>
        <end position="24"/>
    </location>
</feature>
<feature type="binding site" evidence="1">
    <location>
        <position position="34"/>
    </location>
    <ligand>
        <name>ATP</name>
        <dbReference type="ChEBI" id="CHEBI:30616"/>
    </ligand>
</feature>
<feature type="binding site" evidence="1">
    <location>
        <position position="74"/>
    </location>
    <ligand>
        <name>ATP</name>
        <dbReference type="ChEBI" id="CHEBI:30616"/>
    </ligand>
</feature>
<feature type="mutagenesis site" description="Lethality before 5 days post-fertilization (dpf)." evidence="3">
    <original>L</original>
    <variation>R</variation>
    <location>
        <position position="35"/>
    </location>
</feature>
<gene>
    <name type="primary">clp1</name>
</gene>
<dbReference type="EC" id="2.7.1.78"/>
<dbReference type="EMBL" id="CR855307">
    <property type="status" value="NOT_ANNOTATED_CDS"/>
    <property type="molecule type" value="Genomic_DNA"/>
</dbReference>
<dbReference type="RefSeq" id="NP_001333167.1">
    <property type="nucleotide sequence ID" value="NM_001346238.1"/>
</dbReference>
<dbReference type="SMR" id="E7F3I6"/>
<dbReference type="FunCoup" id="E7F3I6">
    <property type="interactions" value="2427"/>
</dbReference>
<dbReference type="STRING" id="7955.ENSDARP00000087664"/>
<dbReference type="PaxDb" id="7955-ENSDARP00000087664"/>
<dbReference type="PeptideAtlas" id="E7F3I6"/>
<dbReference type="Ensembl" id="ENSDART00000093232">
    <property type="protein sequence ID" value="ENSDARP00000087664"/>
    <property type="gene ID" value="ENSDARG00000063663"/>
</dbReference>
<dbReference type="GeneID" id="565621"/>
<dbReference type="KEGG" id="dre:565621"/>
<dbReference type="AGR" id="ZFIN:ZDB-GENE-030131-5306"/>
<dbReference type="CTD" id="10978"/>
<dbReference type="ZFIN" id="ZDB-GENE-030131-5306">
    <property type="gene designation" value="clp1"/>
</dbReference>
<dbReference type="eggNOG" id="KOG2749">
    <property type="taxonomic scope" value="Eukaryota"/>
</dbReference>
<dbReference type="HOGENOM" id="CLU_018195_1_0_1"/>
<dbReference type="InParanoid" id="E7F3I6"/>
<dbReference type="OMA" id="VQYVNCH"/>
<dbReference type="OrthoDB" id="258143at2759"/>
<dbReference type="PhylomeDB" id="E7F3I6"/>
<dbReference type="TreeFam" id="TF105795"/>
<dbReference type="PRO" id="PR:E7F3I6"/>
<dbReference type="Proteomes" id="UP000000437">
    <property type="component" value="Chromosome 14"/>
</dbReference>
<dbReference type="Bgee" id="ENSDARG00000063663">
    <property type="expression patterns" value="Expressed in early embryo and 23 other cell types or tissues"/>
</dbReference>
<dbReference type="GO" id="GO:0005849">
    <property type="term" value="C:mRNA cleavage factor complex"/>
    <property type="evidence" value="ECO:0007669"/>
    <property type="project" value="UniProtKB-UniRule"/>
</dbReference>
<dbReference type="GO" id="GO:0005634">
    <property type="term" value="C:nucleus"/>
    <property type="evidence" value="ECO:0000318"/>
    <property type="project" value="GO_Central"/>
</dbReference>
<dbReference type="GO" id="GO:0000214">
    <property type="term" value="C:tRNA-intron endonuclease complex"/>
    <property type="evidence" value="ECO:0007669"/>
    <property type="project" value="UniProtKB-UniRule"/>
</dbReference>
<dbReference type="GO" id="GO:0005524">
    <property type="term" value="F:ATP binding"/>
    <property type="evidence" value="ECO:0007669"/>
    <property type="project" value="UniProtKB-UniRule"/>
</dbReference>
<dbReference type="GO" id="GO:0046404">
    <property type="term" value="F:ATP-dependent polydeoxyribonucleotide 5'-hydroxyl-kinase activity"/>
    <property type="evidence" value="ECO:0007669"/>
    <property type="project" value="UniProtKB-UniRule"/>
</dbReference>
<dbReference type="GO" id="GO:0051736">
    <property type="term" value="F:ATP-dependent polyribonucleotide 5'-hydroxyl-kinase activity"/>
    <property type="evidence" value="ECO:0000315"/>
    <property type="project" value="UniProtKB"/>
</dbReference>
<dbReference type="GO" id="GO:0051731">
    <property type="term" value="F:polynucleotide 5'-hydroxyl-kinase activity"/>
    <property type="evidence" value="ECO:0000318"/>
    <property type="project" value="GO_Central"/>
</dbReference>
<dbReference type="GO" id="GO:0007420">
    <property type="term" value="P:brain development"/>
    <property type="evidence" value="ECO:0000315"/>
    <property type="project" value="ZFIN"/>
</dbReference>
<dbReference type="GO" id="GO:0021695">
    <property type="term" value="P:cerebellar cortex development"/>
    <property type="evidence" value="ECO:0000250"/>
    <property type="project" value="UniProtKB"/>
</dbReference>
<dbReference type="GO" id="GO:0031124">
    <property type="term" value="P:mRNA 3'-end processing"/>
    <property type="evidence" value="ECO:0007669"/>
    <property type="project" value="UniProtKB-UniRule"/>
</dbReference>
<dbReference type="GO" id="GO:0070922">
    <property type="term" value="P:RISC complex assembly"/>
    <property type="evidence" value="ECO:0007669"/>
    <property type="project" value="UniProtKB-UniRule"/>
</dbReference>
<dbReference type="GO" id="GO:0021522">
    <property type="term" value="P:spinal cord motor neuron differentiation"/>
    <property type="evidence" value="ECO:0000315"/>
    <property type="project" value="ZFIN"/>
</dbReference>
<dbReference type="GO" id="GO:0006388">
    <property type="term" value="P:tRNA splicing, via endonucleolytic cleavage and ligation"/>
    <property type="evidence" value="ECO:0000250"/>
    <property type="project" value="UniProtKB"/>
</dbReference>
<dbReference type="CDD" id="cd01983">
    <property type="entry name" value="SIMIBI"/>
    <property type="match status" value="1"/>
</dbReference>
<dbReference type="FunFam" id="2.40.30.330:FF:000001">
    <property type="entry name" value="Protein CLP1 homolog"/>
    <property type="match status" value="1"/>
</dbReference>
<dbReference type="FunFam" id="3.40.50.300:FF:000454">
    <property type="entry name" value="Protein CLP1 homolog"/>
    <property type="match status" value="1"/>
</dbReference>
<dbReference type="FunFam" id="2.60.120.1030:FF:000001">
    <property type="entry name" value="Protein CLP1 homolog 5"/>
    <property type="match status" value="1"/>
</dbReference>
<dbReference type="Gene3D" id="2.60.120.1030">
    <property type="entry name" value="Clp1, DNA binding domain"/>
    <property type="match status" value="1"/>
</dbReference>
<dbReference type="Gene3D" id="3.40.50.300">
    <property type="entry name" value="P-loop containing nucleotide triphosphate hydrolases"/>
    <property type="match status" value="1"/>
</dbReference>
<dbReference type="Gene3D" id="2.40.30.330">
    <property type="entry name" value="Pre-mRNA cleavage complex subunit Clp1, C-terminal domain"/>
    <property type="match status" value="1"/>
</dbReference>
<dbReference type="HAMAP" id="MF_03035">
    <property type="entry name" value="Clp1"/>
    <property type="match status" value="1"/>
</dbReference>
<dbReference type="InterPro" id="IPR028606">
    <property type="entry name" value="Clp1"/>
</dbReference>
<dbReference type="InterPro" id="IPR045116">
    <property type="entry name" value="Clp1/Grc3"/>
</dbReference>
<dbReference type="InterPro" id="IPR010655">
    <property type="entry name" value="Clp1_C"/>
</dbReference>
<dbReference type="InterPro" id="IPR038238">
    <property type="entry name" value="Clp1_C_sf"/>
</dbReference>
<dbReference type="InterPro" id="IPR032324">
    <property type="entry name" value="Clp1_N"/>
</dbReference>
<dbReference type="InterPro" id="IPR038239">
    <property type="entry name" value="Clp1_N_sf"/>
</dbReference>
<dbReference type="InterPro" id="IPR032319">
    <property type="entry name" value="CLP1_P"/>
</dbReference>
<dbReference type="InterPro" id="IPR027417">
    <property type="entry name" value="P-loop_NTPase"/>
</dbReference>
<dbReference type="PANTHER" id="PTHR12755">
    <property type="entry name" value="CLEAVAGE/POLYADENYLATION FACTOR IA SUBUNIT CLP1P"/>
    <property type="match status" value="1"/>
</dbReference>
<dbReference type="PANTHER" id="PTHR12755:SF6">
    <property type="entry name" value="POLYRIBONUCLEOTIDE 5'-HYDROXYL-KINASE CLP1"/>
    <property type="match status" value="1"/>
</dbReference>
<dbReference type="Pfam" id="PF06807">
    <property type="entry name" value="Clp1"/>
    <property type="match status" value="1"/>
</dbReference>
<dbReference type="Pfam" id="PF16573">
    <property type="entry name" value="CLP1_N"/>
    <property type="match status" value="1"/>
</dbReference>
<dbReference type="Pfam" id="PF16575">
    <property type="entry name" value="CLP1_P"/>
    <property type="match status" value="1"/>
</dbReference>
<dbReference type="SUPFAM" id="SSF52540">
    <property type="entry name" value="P-loop containing nucleoside triphosphate hydrolases"/>
    <property type="match status" value="1"/>
</dbReference>
<proteinExistence type="evidence at protein level"/>
<reference key="1">
    <citation type="journal article" date="2013" name="Nature">
        <title>The zebrafish reference genome sequence and its relationship to the human genome.</title>
        <authorList>
            <person name="Howe K."/>
            <person name="Clark M.D."/>
            <person name="Torroja C.F."/>
            <person name="Torrance J."/>
            <person name="Berthelot C."/>
            <person name="Muffato M."/>
            <person name="Collins J.E."/>
            <person name="Humphray S."/>
            <person name="McLaren K."/>
            <person name="Matthews L."/>
            <person name="McLaren S."/>
            <person name="Sealy I."/>
            <person name="Caccamo M."/>
            <person name="Churcher C."/>
            <person name="Scott C."/>
            <person name="Barrett J.C."/>
            <person name="Koch R."/>
            <person name="Rauch G.J."/>
            <person name="White S."/>
            <person name="Chow W."/>
            <person name="Kilian B."/>
            <person name="Quintais L.T."/>
            <person name="Guerra-Assuncao J.A."/>
            <person name="Zhou Y."/>
            <person name="Gu Y."/>
            <person name="Yen J."/>
            <person name="Vogel J.H."/>
            <person name="Eyre T."/>
            <person name="Redmond S."/>
            <person name="Banerjee R."/>
            <person name="Chi J."/>
            <person name="Fu B."/>
            <person name="Langley E."/>
            <person name="Maguire S.F."/>
            <person name="Laird G.K."/>
            <person name="Lloyd D."/>
            <person name="Kenyon E."/>
            <person name="Donaldson S."/>
            <person name="Sehra H."/>
            <person name="Almeida-King J."/>
            <person name="Loveland J."/>
            <person name="Trevanion S."/>
            <person name="Jones M."/>
            <person name="Quail M."/>
            <person name="Willey D."/>
            <person name="Hunt A."/>
            <person name="Burton J."/>
            <person name="Sims S."/>
            <person name="McLay K."/>
            <person name="Plumb B."/>
            <person name="Davis J."/>
            <person name="Clee C."/>
            <person name="Oliver K."/>
            <person name="Clark R."/>
            <person name="Riddle C."/>
            <person name="Elliot D."/>
            <person name="Threadgold G."/>
            <person name="Harden G."/>
            <person name="Ware D."/>
            <person name="Begum S."/>
            <person name="Mortimore B."/>
            <person name="Kerry G."/>
            <person name="Heath P."/>
            <person name="Phillimore B."/>
            <person name="Tracey A."/>
            <person name="Corby N."/>
            <person name="Dunn M."/>
            <person name="Johnson C."/>
            <person name="Wood J."/>
            <person name="Clark S."/>
            <person name="Pelan S."/>
            <person name="Griffiths G."/>
            <person name="Smith M."/>
            <person name="Glithero R."/>
            <person name="Howden P."/>
            <person name="Barker N."/>
            <person name="Lloyd C."/>
            <person name="Stevens C."/>
            <person name="Harley J."/>
            <person name="Holt K."/>
            <person name="Panagiotidis G."/>
            <person name="Lovell J."/>
            <person name="Beasley H."/>
            <person name="Henderson C."/>
            <person name="Gordon D."/>
            <person name="Auger K."/>
            <person name="Wright D."/>
            <person name="Collins J."/>
            <person name="Raisen C."/>
            <person name="Dyer L."/>
            <person name="Leung K."/>
            <person name="Robertson L."/>
            <person name="Ambridge K."/>
            <person name="Leongamornlert D."/>
            <person name="McGuire S."/>
            <person name="Gilderthorp R."/>
            <person name="Griffiths C."/>
            <person name="Manthravadi D."/>
            <person name="Nichol S."/>
            <person name="Barker G."/>
            <person name="Whitehead S."/>
            <person name="Kay M."/>
            <person name="Brown J."/>
            <person name="Murnane C."/>
            <person name="Gray E."/>
            <person name="Humphries M."/>
            <person name="Sycamore N."/>
            <person name="Barker D."/>
            <person name="Saunders D."/>
            <person name="Wallis J."/>
            <person name="Babbage A."/>
            <person name="Hammond S."/>
            <person name="Mashreghi-Mohammadi M."/>
            <person name="Barr L."/>
            <person name="Martin S."/>
            <person name="Wray P."/>
            <person name="Ellington A."/>
            <person name="Matthews N."/>
            <person name="Ellwood M."/>
            <person name="Woodmansey R."/>
            <person name="Clark G."/>
            <person name="Cooper J."/>
            <person name="Tromans A."/>
            <person name="Grafham D."/>
            <person name="Skuce C."/>
            <person name="Pandian R."/>
            <person name="Andrews R."/>
            <person name="Harrison E."/>
            <person name="Kimberley A."/>
            <person name="Garnett J."/>
            <person name="Fosker N."/>
            <person name="Hall R."/>
            <person name="Garner P."/>
            <person name="Kelly D."/>
            <person name="Bird C."/>
            <person name="Palmer S."/>
            <person name="Gehring I."/>
            <person name="Berger A."/>
            <person name="Dooley C.M."/>
            <person name="Ersan-Urun Z."/>
            <person name="Eser C."/>
            <person name="Geiger H."/>
            <person name="Geisler M."/>
            <person name="Karotki L."/>
            <person name="Kirn A."/>
            <person name="Konantz J."/>
            <person name="Konantz M."/>
            <person name="Oberlander M."/>
            <person name="Rudolph-Geiger S."/>
            <person name="Teucke M."/>
            <person name="Lanz C."/>
            <person name="Raddatz G."/>
            <person name="Osoegawa K."/>
            <person name="Zhu B."/>
            <person name="Rapp A."/>
            <person name="Widaa S."/>
            <person name="Langford C."/>
            <person name="Yang F."/>
            <person name="Schuster S.C."/>
            <person name="Carter N.P."/>
            <person name="Harrow J."/>
            <person name="Ning Z."/>
            <person name="Herrero J."/>
            <person name="Searle S.M."/>
            <person name="Enright A."/>
            <person name="Geisler R."/>
            <person name="Plasterk R.H."/>
            <person name="Lee C."/>
            <person name="Westerfield M."/>
            <person name="de Jong P.J."/>
            <person name="Zon L.I."/>
            <person name="Postlethwait J.H."/>
            <person name="Nusslein-Volhard C."/>
            <person name="Hubbard T.J."/>
            <person name="Roest Crollius H."/>
            <person name="Rogers J."/>
            <person name="Stemple D.L."/>
        </authorList>
    </citation>
    <scope>NUCLEOTIDE SEQUENCE [LARGE SCALE GENOMIC DNA]</scope>
    <source>
        <strain>Tuebingen</strain>
    </source>
</reference>
<reference key="2">
    <citation type="journal article" date="2014" name="Cell">
        <title>CLP1 founder mutation links tRNA splicing and maturation to cerebellar development and neurodegeneration.</title>
        <authorList>
            <person name="Schaffer A.E."/>
            <person name="Eggens V.R."/>
            <person name="Caglayan A.O."/>
            <person name="Reuter M.S."/>
            <person name="Scott E."/>
            <person name="Coufal N.G."/>
            <person name="Silhavy J.L."/>
            <person name="Xue Y."/>
            <person name="Kayserili H."/>
            <person name="Yasuno K."/>
            <person name="Rosti R.O."/>
            <person name="Abdellateef M."/>
            <person name="Caglar C."/>
            <person name="Kasher P.R."/>
            <person name="Cazemier J.L."/>
            <person name="Weterman M.A."/>
            <person name="Cantagrel V."/>
            <person name="Cai N."/>
            <person name="Zweier C."/>
            <person name="Altunoglu U."/>
            <person name="Satkin N.B."/>
            <person name="Aktar F."/>
            <person name="Tuysuz B."/>
            <person name="Yalcinkaya C."/>
            <person name="Caksen H."/>
            <person name="Bilguvar K."/>
            <person name="Fu X.D."/>
            <person name="Trotta C.R."/>
            <person name="Gabriel S."/>
            <person name="Reis A."/>
            <person name="Gunel M."/>
            <person name="Baas F."/>
            <person name="Gleeson J.G."/>
        </authorList>
    </citation>
    <scope>FUNCTION</scope>
    <scope>TISSUE SPECIFICITY</scope>
    <scope>DISRUPTION PHENOTYPE</scope>
    <scope>MUTAGENESIS OF LEU-35</scope>
</reference>
<evidence type="ECO:0000250" key="1"/>
<evidence type="ECO:0000256" key="2">
    <source>
        <dbReference type="SAM" id="MobiDB-lite"/>
    </source>
</evidence>
<evidence type="ECO:0000269" key="3">
    <source>
    </source>
</evidence>
<evidence type="ECO:0000305" key="4"/>
<name>CLP1_DANRE</name>
<comment type="function">
    <text evidence="3">Polynucleotide kinase that can phosphorylate the 5'-hydroxyl groups of double-stranded RNA (dsRNA), single-stranded RNA (ssRNA), double stranded DNA (dsDNA) and double-stranded DNA:RNA hybrids. dsRNA is phosphorylated more efficiently than dsDNA, and the RNA component of a DNA:RNA hybrid is phosphorylated more efficiently than the DNA component. Plays a role in both tRNA splicing and mRNA 3'-end formation. Component of the tRNA splicing endonuclease complex: phosphorylates the 5'-terminus of the tRNA 3'-exon during tRNA splicing; this phosphorylation event is a prerequisite for the subsequent ligation of the two exon halves and the production of a mature tRNA. Its role in tRNA splicing and maturation is required for cerebellar development. Component of the pre-mRNA cleavage complex II (CF-II), which seems to be required for mRNA 3'-end formation. Also phosphorylates the 5'-terminus of exogenously introduced short interfering RNAs (siRNAs), which is a necessary prerequisite for their incorporation into the RNA-induced silencing complex (RISC). However, endogenous siRNAs and microRNAs (miRNAs) that are produced by the cleavage of dsRNA precursors by dicer1 already contain a 5'-phosphate group, so this protein may be dispensible for normal RNA-mediated gene silencing.</text>
</comment>
<comment type="catalytic activity">
    <reaction>
        <text>a 5'-end dephospho-2'-deoxyribonucleoside-DNA + ATP = a 5'-end 5'-phospho-2'-deoxyribonucleoside-DNA + ADP + H(+)</text>
        <dbReference type="Rhea" id="RHEA:15669"/>
        <dbReference type="Rhea" id="RHEA-COMP:13180"/>
        <dbReference type="Rhea" id="RHEA-COMP:13184"/>
        <dbReference type="ChEBI" id="CHEBI:15378"/>
        <dbReference type="ChEBI" id="CHEBI:30616"/>
        <dbReference type="ChEBI" id="CHEBI:136412"/>
        <dbReference type="ChEBI" id="CHEBI:136416"/>
        <dbReference type="ChEBI" id="CHEBI:456216"/>
        <dbReference type="EC" id="2.7.1.78"/>
    </reaction>
</comment>
<comment type="catalytic activity">
    <reaction>
        <text>a 5'-end dephospho-ribonucleoside-RNA + ATP = a 5'-end 5'-phospho-ribonucleoside-RNA + ADP + H(+)</text>
        <dbReference type="Rhea" id="RHEA:54580"/>
        <dbReference type="Rhea" id="RHEA-COMP:13936"/>
        <dbReference type="Rhea" id="RHEA-COMP:15179"/>
        <dbReference type="ChEBI" id="CHEBI:15378"/>
        <dbReference type="ChEBI" id="CHEBI:30616"/>
        <dbReference type="ChEBI" id="CHEBI:138282"/>
        <dbReference type="ChEBI" id="CHEBI:138284"/>
        <dbReference type="ChEBI" id="CHEBI:456216"/>
        <dbReference type="EC" id="2.7.1.78"/>
    </reaction>
</comment>
<comment type="subunit">
    <text evidence="1">Component of the tRNA splicing endonuclease complex. Component of pre-mRNA cleavage complex II (CF-II) (By similarity).</text>
</comment>
<comment type="subcellular location">
    <subcellularLocation>
        <location evidence="1">Nucleus</location>
    </subcellularLocation>
</comment>
<comment type="tissue specificity">
    <text evidence="3">Strong neural expression.</text>
</comment>
<comment type="disruption phenotype">
    <text evidence="3">Lethality before 5 days post-fertilization (dpf). Mutants display abnormal swimming behavior, abnormal head shape and curved tail. Defects are due to neuromotor defects and cerebellar neurodegeneration.</text>
</comment>
<comment type="similarity">
    <text evidence="4">Belongs to the Clp1 family. Clp1 subfamily.</text>
</comment>
<sequence>MTAEAAEKSVEEGLSSSGSAGSSGTRFDLDKETELRFEVEAGERVQLELLSGLAEIFGSELNRNKKYTFGPGSKIAVFTWQGCGVALSGKTEVAYVSKDTPMLLYLNTHAALEQMRRQAEKDNERGPRVMVVGPTDVGKSTVCRMLLNYAVRLGRRPTLVELDVGQSSVSVPGTMSALCIERPADVEEGFSVQAPLVFHFGSTTPGTNIKLYNKLTSSLADAFSQRCEVNRRASVGGCIINTCGWVKGSGYQALVHCASAFQVDVVLVLDQERLYNELKRDLPHFVRVVLLPKSGGVVERSKDCRRETRDEKIREYFYGFRGTSFYPHAFDVRFSDVRIYKIGAPSIPDSCLPLGMSQDDTQLKLVPVSPGRDLTHHVLSVSSVDDEAEVGQSRGILESPACGFIVVTAVDTQAQVMTVLSPAPRPLPRHTLLIMDIRFIDLK</sequence>
<accession>E7F3I6</accession>